<gene>
    <name evidence="1" type="primary">trmY</name>
    <name type="ordered locus">UNCMA_08190</name>
    <name type="ORF">RCIX2338</name>
</gene>
<protein>
    <recommendedName>
        <fullName evidence="1">tRNA (pseudouridine(54)-N(1))-methyltransferase</fullName>
        <ecNumber evidence="1">2.1.1.257</ecNumber>
    </recommendedName>
</protein>
<organism>
    <name type="scientific">Methanocella arvoryzae (strain DSM 22066 / NBRC 105507 / MRE50)</name>
    <dbReference type="NCBI Taxonomy" id="351160"/>
    <lineage>
        <taxon>Archaea</taxon>
        <taxon>Methanobacteriati</taxon>
        <taxon>Methanobacteriota</taxon>
        <taxon>Stenosarchaea group</taxon>
        <taxon>Methanomicrobia</taxon>
        <taxon>Methanocellales</taxon>
        <taxon>Methanocellaceae</taxon>
        <taxon>Methanocella</taxon>
    </lineage>
</organism>
<sequence>MRRFVVVGHRAVTTPKFSLNDLPGGAGRMDIIARCVNASLFLSHDLRRDVEFFAILLGEPTPPVTIKFSGEHVRYLSPDERSPAALIKKALERGIPVEGEAEATPGVYISKRSFADLINGMDNLVYLHEDGEDIRSVELTGNETFVLSDHQNLTPEEEAVLEAKGAKKVSLGKKLYHADHCIVMVNWETDRR</sequence>
<dbReference type="EC" id="2.1.1.257" evidence="1"/>
<dbReference type="EMBL" id="AM114193">
    <property type="protein sequence ID" value="CAJ37433.1"/>
    <property type="molecule type" value="Genomic_DNA"/>
</dbReference>
<dbReference type="RefSeq" id="WP_012035148.1">
    <property type="nucleotide sequence ID" value="NC_009464.1"/>
</dbReference>
<dbReference type="SMR" id="Q0W2G0"/>
<dbReference type="STRING" id="351160.RCIX2338"/>
<dbReference type="GeneID" id="5143822"/>
<dbReference type="KEGG" id="rci:RCIX2338"/>
<dbReference type="eggNOG" id="arCOG01239">
    <property type="taxonomic scope" value="Archaea"/>
</dbReference>
<dbReference type="OrthoDB" id="27492at2157"/>
<dbReference type="Proteomes" id="UP000000663">
    <property type="component" value="Chromosome"/>
</dbReference>
<dbReference type="GO" id="GO:0005737">
    <property type="term" value="C:cytoplasm"/>
    <property type="evidence" value="ECO:0007669"/>
    <property type="project" value="UniProtKB-SubCell"/>
</dbReference>
<dbReference type="GO" id="GO:0008757">
    <property type="term" value="F:S-adenosylmethionine-dependent methyltransferase activity"/>
    <property type="evidence" value="ECO:0007669"/>
    <property type="project" value="UniProtKB-UniRule"/>
</dbReference>
<dbReference type="GO" id="GO:0008175">
    <property type="term" value="F:tRNA methyltransferase activity"/>
    <property type="evidence" value="ECO:0007669"/>
    <property type="project" value="UniProtKB-UniRule"/>
</dbReference>
<dbReference type="GO" id="GO:0030488">
    <property type="term" value="P:tRNA methylation"/>
    <property type="evidence" value="ECO:0007669"/>
    <property type="project" value="UniProtKB-UniRule"/>
</dbReference>
<dbReference type="CDD" id="cd18087">
    <property type="entry name" value="TrmY-like"/>
    <property type="match status" value="1"/>
</dbReference>
<dbReference type="Gene3D" id="3.40.1280.10">
    <property type="match status" value="1"/>
</dbReference>
<dbReference type="HAMAP" id="MF_00587">
    <property type="entry name" value="tRNA_methyltr_TrmY"/>
    <property type="match status" value="1"/>
</dbReference>
<dbReference type="InterPro" id="IPR029028">
    <property type="entry name" value="Alpha/beta_knot_MTases"/>
</dbReference>
<dbReference type="InterPro" id="IPR007158">
    <property type="entry name" value="TrmY"/>
</dbReference>
<dbReference type="InterPro" id="IPR029026">
    <property type="entry name" value="tRNA_m1G_MTases_N"/>
</dbReference>
<dbReference type="NCBIfam" id="NF002560">
    <property type="entry name" value="PRK02135.1"/>
    <property type="match status" value="1"/>
</dbReference>
<dbReference type="PANTHER" id="PTHR40703">
    <property type="entry name" value="TRNA (PSEUDOURIDINE(54)-N(1))-METHYLTRANSFERASE"/>
    <property type="match status" value="1"/>
</dbReference>
<dbReference type="PANTHER" id="PTHR40703:SF1">
    <property type="entry name" value="TRNA (PSEUDOURIDINE(54)-N(1))-METHYLTRANSFERASE"/>
    <property type="match status" value="1"/>
</dbReference>
<dbReference type="Pfam" id="PF04013">
    <property type="entry name" value="Methyltrn_RNA_2"/>
    <property type="match status" value="1"/>
</dbReference>
<dbReference type="SUPFAM" id="SSF75217">
    <property type="entry name" value="alpha/beta knot"/>
    <property type="match status" value="1"/>
</dbReference>
<reference key="1">
    <citation type="journal article" date="2006" name="Science">
        <title>Genome of rice cluster I archaea -- the key methane producers in the rice rhizosphere.</title>
        <authorList>
            <person name="Erkel C."/>
            <person name="Kube M."/>
            <person name="Reinhardt R."/>
            <person name="Liesack W."/>
        </authorList>
    </citation>
    <scope>NUCLEOTIDE SEQUENCE [LARGE SCALE GENOMIC DNA]</scope>
    <source>
        <strain>DSM 22066 / NBRC 105507 / MRE50</strain>
    </source>
</reference>
<accession>Q0W2G0</accession>
<proteinExistence type="inferred from homology"/>
<feature type="chain" id="PRO_1000025474" description="tRNA (pseudouridine(54)-N(1))-methyltransferase">
    <location>
        <begin position="1"/>
        <end position="192"/>
    </location>
</feature>
<feature type="binding site" evidence="1">
    <location>
        <position position="127"/>
    </location>
    <ligand>
        <name>S-adenosyl-L-methionine</name>
        <dbReference type="ChEBI" id="CHEBI:59789"/>
    </ligand>
</feature>
<feature type="binding site" evidence="1">
    <location>
        <position position="181"/>
    </location>
    <ligand>
        <name>S-adenosyl-L-methionine</name>
        <dbReference type="ChEBI" id="CHEBI:59789"/>
    </ligand>
</feature>
<evidence type="ECO:0000255" key="1">
    <source>
        <dbReference type="HAMAP-Rule" id="MF_00587"/>
    </source>
</evidence>
<name>TRMY_METAR</name>
<comment type="function">
    <text evidence="1">Specifically catalyzes the N1-methylation of pseudouridine at position 54 (Psi54) in tRNAs.</text>
</comment>
<comment type="catalytic activity">
    <reaction evidence="1">
        <text>pseudouridine(54) in tRNA + S-adenosyl-L-methionine = N(1)-methylpseudouridine(54) in tRNA + S-adenosyl-L-homocysteine + H(+)</text>
        <dbReference type="Rhea" id="RHEA:55292"/>
        <dbReference type="Rhea" id="RHEA-COMP:14140"/>
        <dbReference type="Rhea" id="RHEA-COMP:14141"/>
        <dbReference type="ChEBI" id="CHEBI:15378"/>
        <dbReference type="ChEBI" id="CHEBI:57856"/>
        <dbReference type="ChEBI" id="CHEBI:59789"/>
        <dbReference type="ChEBI" id="CHEBI:65314"/>
        <dbReference type="ChEBI" id="CHEBI:74890"/>
        <dbReference type="EC" id="2.1.1.257"/>
    </reaction>
</comment>
<comment type="subunit">
    <text evidence="1">Homodimer.</text>
</comment>
<comment type="subcellular location">
    <subcellularLocation>
        <location evidence="1">Cytoplasm</location>
    </subcellularLocation>
</comment>
<comment type="similarity">
    <text evidence="1">Belongs to the methyltransferase superfamily. TrmY family.</text>
</comment>
<keyword id="KW-0963">Cytoplasm</keyword>
<keyword id="KW-0489">Methyltransferase</keyword>
<keyword id="KW-1185">Reference proteome</keyword>
<keyword id="KW-0949">S-adenosyl-L-methionine</keyword>
<keyword id="KW-0808">Transferase</keyword>
<keyword id="KW-0819">tRNA processing</keyword>